<gene>
    <name type="ordered locus">At5g39410</name>
    <name type="ORF">MUL8.9</name>
</gene>
<protein>
    <recommendedName>
        <fullName>Probable mitochondrial saccharopine dehydrogenase-like oxidoreductase At5g39410</fullName>
        <shortName>SDH</shortName>
        <ecNumber>1.-.-.-</ecNumber>
    </recommendedName>
</protein>
<name>SCPDL_ARATH</name>
<accession>Q8LGI2</accession>
<accession>Q9ZR98</accession>
<organism>
    <name type="scientific">Arabidopsis thaliana</name>
    <name type="common">Mouse-ear cress</name>
    <dbReference type="NCBI Taxonomy" id="3702"/>
    <lineage>
        <taxon>Eukaryota</taxon>
        <taxon>Viridiplantae</taxon>
        <taxon>Streptophyta</taxon>
        <taxon>Embryophyta</taxon>
        <taxon>Tracheophyta</taxon>
        <taxon>Spermatophyta</taxon>
        <taxon>Magnoliopsida</taxon>
        <taxon>eudicotyledons</taxon>
        <taxon>Gunneridae</taxon>
        <taxon>Pentapetalae</taxon>
        <taxon>rosids</taxon>
        <taxon>malvids</taxon>
        <taxon>Brassicales</taxon>
        <taxon>Brassicaceae</taxon>
        <taxon>Camelineae</taxon>
        <taxon>Arabidopsis</taxon>
    </lineage>
</organism>
<proteinExistence type="evidence at protein level"/>
<sequence>MNPTQKPEPVYDMVILGASGFTGKYVVREALKFLQTPSSSPLKSLALAGRNPTRLTQSLEWAARPNPPPSSVAILTADTSDPDSLRRLCTQTKLILNCVGPFRIHGDPVVSACADSGCDYLDISGEPEFMERMEANYHDRAEETGSLIVSACGFDSIPAELGLLFNAKQWVSPSVPNQIEAYLSLESDKKIAGNFGTYESAVLGVANAEKLKELRRSRPRRPRPTICGPPAKGPTLENQKTIGLWALKLPSADAVVVRRTLTTLTEKPHGLPGINESPEQIQKREAFWSSIKPAHFGVKITSKSLFGIFRYVTLGVSLGLLSKFSFGRWLLLKFPSVFSLGWFQKKGPSEEEVESATFKMWFIGRGYSEESLASQGETKPDLEIITRISGPEIGYITTPITLVQCGLIVLGQRESLVKGGVYTPGIVFGSTDIQQRLEDNGISFELISKIKTQG</sequence>
<reference key="1">
    <citation type="submission" date="1996-12" db="EMBL/GenBank/DDBJ databases">
        <authorList>
            <person name="Lessard P."/>
            <person name="Petit-Jean X."/>
            <person name="Kreis M."/>
            <person name="Thomas M."/>
        </authorList>
    </citation>
    <scope>NUCLEOTIDE SEQUENCE [MRNA]</scope>
    <source>
        <strain>cv. Columbia</strain>
    </source>
</reference>
<reference key="2">
    <citation type="journal article" date="1998" name="DNA Res.">
        <title>Structural analysis of Arabidopsis thaliana chromosome 5. IV. Sequence features of the regions of 1,456,315 bp covered by nineteen physically assigned P1 and TAC clones.</title>
        <authorList>
            <person name="Sato S."/>
            <person name="Kaneko T."/>
            <person name="Kotani H."/>
            <person name="Nakamura Y."/>
            <person name="Asamizu E."/>
            <person name="Miyajima N."/>
            <person name="Tabata S."/>
        </authorList>
    </citation>
    <scope>NUCLEOTIDE SEQUENCE [LARGE SCALE GENOMIC DNA]</scope>
    <source>
        <strain>cv. Columbia</strain>
    </source>
</reference>
<reference key="3">
    <citation type="journal article" date="2017" name="Plant J.">
        <title>Araport11: a complete reannotation of the Arabidopsis thaliana reference genome.</title>
        <authorList>
            <person name="Cheng C.Y."/>
            <person name="Krishnakumar V."/>
            <person name="Chan A.P."/>
            <person name="Thibaud-Nissen F."/>
            <person name="Schobel S."/>
            <person name="Town C.D."/>
        </authorList>
    </citation>
    <scope>GENOME REANNOTATION</scope>
    <source>
        <strain>cv. Columbia</strain>
    </source>
</reference>
<reference key="4">
    <citation type="submission" date="2002-03" db="EMBL/GenBank/DDBJ databases">
        <title>Full-length cDNA from Arabidopsis thaliana.</title>
        <authorList>
            <person name="Brover V.V."/>
            <person name="Troukhan M.E."/>
            <person name="Alexandrov N.A."/>
            <person name="Lu Y.-P."/>
            <person name="Flavell R.B."/>
            <person name="Feldmann K.A."/>
        </authorList>
    </citation>
    <scope>NUCLEOTIDE SEQUENCE [LARGE SCALE MRNA]</scope>
</reference>
<reference key="5">
    <citation type="journal article" date="2004" name="Plant Cell">
        <title>Experimental analysis of the Arabidopsis mitochondrial proteome highlights signaling and regulatory components, provides assessment of targeting prediction programs, and indicates plant-specific mitochondrial proteins.</title>
        <authorList>
            <person name="Heazlewood J.L."/>
            <person name="Tonti-Filippini J.S."/>
            <person name="Gout A.M."/>
            <person name="Day D.A."/>
            <person name="Whelan J."/>
            <person name="Millar A.H."/>
        </authorList>
    </citation>
    <scope>IDENTIFICATION BY MASS SPECTROMETRY</scope>
    <scope>SUBCELLULAR LOCATION [LARGE SCALE ANALYSIS]</scope>
    <source>
        <strain>cv. Landsberg erecta</strain>
    </source>
</reference>
<reference key="6">
    <citation type="journal article" date="2012" name="Mol. Cell. Proteomics">
        <title>Comparative large-scale characterisation of plant vs. mammal proteins reveals similar and idiosyncratic N-alpha acetylation features.</title>
        <authorList>
            <person name="Bienvenut W.V."/>
            <person name="Sumpton D."/>
            <person name="Martinez A."/>
            <person name="Lilla S."/>
            <person name="Espagne C."/>
            <person name="Meinnel T."/>
            <person name="Giglione C."/>
        </authorList>
    </citation>
    <scope>ACETYLATION [LARGE SCALE ANALYSIS] AT MET-1</scope>
    <scope>IDENTIFICATION BY MASS SPECTROMETRY [LARGE SCALE ANALYSIS]</scope>
</reference>
<evidence type="ECO:0000256" key="1">
    <source>
        <dbReference type="SAM" id="MobiDB-lite"/>
    </source>
</evidence>
<evidence type="ECO:0000269" key="2">
    <source>
    </source>
</evidence>
<evidence type="ECO:0000305" key="3"/>
<evidence type="ECO:0007744" key="4">
    <source>
    </source>
</evidence>
<dbReference type="EC" id="1.-.-.-"/>
<dbReference type="EMBL" id="U83179">
    <property type="protein sequence ID" value="AAD09232.1"/>
    <property type="molecule type" value="mRNA"/>
</dbReference>
<dbReference type="EMBL" id="AB009054">
    <property type="protein sequence ID" value="BAB11014.1"/>
    <property type="molecule type" value="Genomic_DNA"/>
</dbReference>
<dbReference type="EMBL" id="CP002688">
    <property type="protein sequence ID" value="AED94430.1"/>
    <property type="molecule type" value="Genomic_DNA"/>
</dbReference>
<dbReference type="EMBL" id="AY084257">
    <property type="protein sequence ID" value="AAM60851.1"/>
    <property type="molecule type" value="mRNA"/>
</dbReference>
<dbReference type="RefSeq" id="NP_568564.1">
    <property type="nucleotide sequence ID" value="NM_123303.4"/>
</dbReference>
<dbReference type="BioGRID" id="19188">
    <property type="interactions" value="2"/>
</dbReference>
<dbReference type="FunCoup" id="Q8LGI2">
    <property type="interactions" value="1717"/>
</dbReference>
<dbReference type="IntAct" id="Q8LGI2">
    <property type="interactions" value="1"/>
</dbReference>
<dbReference type="STRING" id="3702.Q8LGI2"/>
<dbReference type="iPTMnet" id="Q8LGI2"/>
<dbReference type="PaxDb" id="3702-AT5G39410.1"/>
<dbReference type="ProteomicsDB" id="232856"/>
<dbReference type="DNASU" id="833937"/>
<dbReference type="EnsemblPlants" id="AT5G39410.1">
    <property type="protein sequence ID" value="AT5G39410.1"/>
    <property type="gene ID" value="AT5G39410"/>
</dbReference>
<dbReference type="GeneID" id="833937"/>
<dbReference type="Gramene" id="AT5G39410.1">
    <property type="protein sequence ID" value="AT5G39410.1"/>
    <property type="gene ID" value="AT5G39410"/>
</dbReference>
<dbReference type="KEGG" id="ath:AT5G39410"/>
<dbReference type="Araport" id="AT5G39410"/>
<dbReference type="TAIR" id="AT5G39410"/>
<dbReference type="eggNOG" id="KOG2733">
    <property type="taxonomic scope" value="Eukaryota"/>
</dbReference>
<dbReference type="HOGENOM" id="CLU_031002_1_1_1"/>
<dbReference type="InParanoid" id="Q8LGI2"/>
<dbReference type="OMA" id="KRPVQMH"/>
<dbReference type="PhylomeDB" id="Q8LGI2"/>
<dbReference type="PRO" id="PR:Q8LGI2"/>
<dbReference type="Proteomes" id="UP000006548">
    <property type="component" value="Chromosome 5"/>
</dbReference>
<dbReference type="ExpressionAtlas" id="Q8LGI2">
    <property type="expression patterns" value="baseline and differential"/>
</dbReference>
<dbReference type="GO" id="GO:0009941">
    <property type="term" value="C:chloroplast envelope"/>
    <property type="evidence" value="ECO:0007005"/>
    <property type="project" value="TAIR"/>
</dbReference>
<dbReference type="GO" id="GO:0031966">
    <property type="term" value="C:mitochondrial membrane"/>
    <property type="evidence" value="ECO:0007669"/>
    <property type="project" value="UniProtKB-SubCell"/>
</dbReference>
<dbReference type="GO" id="GO:0005739">
    <property type="term" value="C:mitochondrion"/>
    <property type="evidence" value="ECO:0007005"/>
    <property type="project" value="TAIR"/>
</dbReference>
<dbReference type="GO" id="GO:0000325">
    <property type="term" value="C:plant-type vacuole"/>
    <property type="evidence" value="ECO:0007005"/>
    <property type="project" value="TAIR"/>
</dbReference>
<dbReference type="GO" id="GO:0005886">
    <property type="term" value="C:plasma membrane"/>
    <property type="evidence" value="ECO:0007005"/>
    <property type="project" value="TAIR"/>
</dbReference>
<dbReference type="GO" id="GO:0009536">
    <property type="term" value="C:plastid"/>
    <property type="evidence" value="ECO:0007005"/>
    <property type="project" value="TAIR"/>
</dbReference>
<dbReference type="GO" id="GO:0016491">
    <property type="term" value="F:oxidoreductase activity"/>
    <property type="evidence" value="ECO:0007669"/>
    <property type="project" value="UniProtKB-KW"/>
</dbReference>
<dbReference type="FunFam" id="3.40.50.720:FF:000455">
    <property type="entry name" value="Putative mitochondrial saccharopine dehydrogenase-like oxidoreductase"/>
    <property type="match status" value="1"/>
</dbReference>
<dbReference type="Gene3D" id="3.40.50.720">
    <property type="entry name" value="NAD(P)-binding Rossmann-like Domain"/>
    <property type="match status" value="1"/>
</dbReference>
<dbReference type="InterPro" id="IPR036291">
    <property type="entry name" value="NAD(P)-bd_dom_sf"/>
</dbReference>
<dbReference type="InterPro" id="IPR051276">
    <property type="entry name" value="Saccharopine_DH-like_oxidrdct"/>
</dbReference>
<dbReference type="InterPro" id="IPR005097">
    <property type="entry name" value="Sacchrp_dh_NADP-bd"/>
</dbReference>
<dbReference type="PANTHER" id="PTHR12286">
    <property type="entry name" value="SACCHAROPINE DEHYDROGENASE-LIKE OXIDOREDUCTASE"/>
    <property type="match status" value="1"/>
</dbReference>
<dbReference type="PANTHER" id="PTHR12286:SF5">
    <property type="entry name" value="SACCHAROPINE DEHYDROGENASE-LIKE OXIDOREDUCTASE"/>
    <property type="match status" value="1"/>
</dbReference>
<dbReference type="Pfam" id="PF03435">
    <property type="entry name" value="Sacchrp_dh_NADP"/>
    <property type="match status" value="1"/>
</dbReference>
<dbReference type="SUPFAM" id="SSF51735">
    <property type="entry name" value="NAD(P)-binding Rossmann-fold domains"/>
    <property type="match status" value="1"/>
</dbReference>
<keyword id="KW-0007">Acetylation</keyword>
<keyword id="KW-0472">Membrane</keyword>
<keyword id="KW-0496">Mitochondrion</keyword>
<keyword id="KW-0560">Oxidoreductase</keyword>
<keyword id="KW-1185">Reference proteome</keyword>
<comment type="subcellular location">
    <subcellularLocation>
        <location evidence="2">Mitochondrion membrane</location>
    </subcellularLocation>
</comment>
<comment type="similarity">
    <text evidence="3">Belongs to the saccharopine dehydrogenase family.</text>
</comment>
<feature type="chain" id="PRO_0000226069" description="Probable mitochondrial saccharopine dehydrogenase-like oxidoreductase At5g39410">
    <location>
        <begin position="1"/>
        <end position="454"/>
    </location>
</feature>
<feature type="region of interest" description="Disordered" evidence="1">
    <location>
        <begin position="215"/>
        <end position="234"/>
    </location>
</feature>
<feature type="modified residue" description="N-acetylmethionine" evidence="4">
    <location>
        <position position="1"/>
    </location>
</feature>
<feature type="sequence conflict" description="In Ref. 4; AAM60851." evidence="3" ref="4">
    <original>E</original>
    <variation>D</variation>
    <location>
        <position position="8"/>
    </location>
</feature>
<feature type="sequence conflict" description="In Ref. 4; AAM60851." evidence="3" ref="4">
    <original>M</original>
    <variation>I</variation>
    <location>
        <position position="13"/>
    </location>
</feature>
<feature type="sequence conflict" description="In Ref. 4." evidence="3" ref="4">
    <location>
        <position position="38"/>
    </location>
</feature>
<feature type="sequence conflict" description="In Ref. 4; AAM60851." evidence="3" ref="4">
    <original>N</original>
    <variation>K</variation>
    <location>
        <position position="136"/>
    </location>
</feature>
<feature type="sequence conflict" description="In Ref. 4; AAM60851." evidence="3" ref="4">
    <original>V</original>
    <variation>L</variation>
    <location>
        <position position="403"/>
    </location>
</feature>